<reference key="1">
    <citation type="journal article" date="1998" name="DNA Res.">
        <title>Complete sequence and gene organization of the genome of a hyper-thermophilic archaebacterium, Pyrococcus horikoshii OT3.</title>
        <authorList>
            <person name="Kawarabayasi Y."/>
            <person name="Sawada M."/>
            <person name="Horikawa H."/>
            <person name="Haikawa Y."/>
            <person name="Hino Y."/>
            <person name="Yamamoto S."/>
            <person name="Sekine M."/>
            <person name="Baba S."/>
            <person name="Kosugi H."/>
            <person name="Hosoyama A."/>
            <person name="Nagai Y."/>
            <person name="Sakai M."/>
            <person name="Ogura K."/>
            <person name="Otsuka R."/>
            <person name="Nakazawa H."/>
            <person name="Takamiya M."/>
            <person name="Ohfuku Y."/>
            <person name="Funahashi T."/>
            <person name="Tanaka T."/>
            <person name="Kudoh Y."/>
            <person name="Yamazaki J."/>
            <person name="Kushida N."/>
            <person name="Oguchi A."/>
            <person name="Aoki K."/>
            <person name="Yoshizawa T."/>
            <person name="Nakamura Y."/>
            <person name="Robb F.T."/>
            <person name="Horikoshi K."/>
            <person name="Masuchi Y."/>
            <person name="Shizuya H."/>
            <person name="Kikuchi H."/>
        </authorList>
    </citation>
    <scope>NUCLEOTIDE SEQUENCE [LARGE SCALE GENOMIC DNA]</scope>
    <source>
        <strain>ATCC 700860 / DSM 12428 / JCM 9974 / NBRC 100139 / OT-3</strain>
    </source>
</reference>
<protein>
    <recommendedName>
        <fullName evidence="1">Small ribosomal subunit protein eS31</fullName>
    </recommendedName>
    <alternativeName>
        <fullName evidence="2">30S ribosomal protein S27ae</fullName>
    </alternativeName>
</protein>
<feature type="chain" id="PRO_0000137704" description="Small ribosomal subunit protein eS31">
    <location>
        <begin position="1"/>
        <end position="50"/>
    </location>
</feature>
<feature type="zinc finger region" description="C4-type" evidence="1">
    <location>
        <begin position="22"/>
        <end position="43"/>
    </location>
</feature>
<feature type="binding site" evidence="1">
    <location>
        <position position="22"/>
    </location>
    <ligand>
        <name>Zn(2+)</name>
        <dbReference type="ChEBI" id="CHEBI:29105"/>
    </ligand>
</feature>
<feature type="binding site" evidence="1">
    <location>
        <position position="25"/>
    </location>
    <ligand>
        <name>Zn(2+)</name>
        <dbReference type="ChEBI" id="CHEBI:29105"/>
    </ligand>
</feature>
<feature type="binding site" evidence="1">
    <location>
        <position position="40"/>
    </location>
    <ligand>
        <name>Zn(2+)</name>
        <dbReference type="ChEBI" id="CHEBI:29105"/>
    </ligand>
</feature>
<feature type="binding site" evidence="1">
    <location>
        <position position="43"/>
    </location>
    <ligand>
        <name>Zn(2+)</name>
        <dbReference type="ChEBI" id="CHEBI:29105"/>
    </ligand>
</feature>
<proteinExistence type="inferred from homology"/>
<name>RS27A_PYRHO</name>
<evidence type="ECO:0000255" key="1">
    <source>
        <dbReference type="HAMAP-Rule" id="MF_00777"/>
    </source>
</evidence>
<evidence type="ECO:0000305" key="2"/>
<dbReference type="EMBL" id="BA000001">
    <property type="status" value="NOT_ANNOTATED_CDS"/>
    <property type="molecule type" value="Genomic_DNA"/>
</dbReference>
<dbReference type="SMR" id="P61239"/>
<dbReference type="Proteomes" id="UP000000752">
    <property type="component" value="Chromosome"/>
</dbReference>
<dbReference type="GO" id="GO:1990904">
    <property type="term" value="C:ribonucleoprotein complex"/>
    <property type="evidence" value="ECO:0007669"/>
    <property type="project" value="UniProtKB-KW"/>
</dbReference>
<dbReference type="GO" id="GO:0005840">
    <property type="term" value="C:ribosome"/>
    <property type="evidence" value="ECO:0007669"/>
    <property type="project" value="UniProtKB-KW"/>
</dbReference>
<dbReference type="GO" id="GO:0003735">
    <property type="term" value="F:structural constituent of ribosome"/>
    <property type="evidence" value="ECO:0007669"/>
    <property type="project" value="InterPro"/>
</dbReference>
<dbReference type="GO" id="GO:0008270">
    <property type="term" value="F:zinc ion binding"/>
    <property type="evidence" value="ECO:0007669"/>
    <property type="project" value="UniProtKB-UniRule"/>
</dbReference>
<dbReference type="GO" id="GO:0006412">
    <property type="term" value="P:translation"/>
    <property type="evidence" value="ECO:0007669"/>
    <property type="project" value="UniProtKB-UniRule"/>
</dbReference>
<dbReference type="Gene3D" id="6.20.50.180">
    <property type="match status" value="1"/>
</dbReference>
<dbReference type="HAMAP" id="MF_00777">
    <property type="entry name" value="Ribosomal_eS31"/>
    <property type="match status" value="1"/>
</dbReference>
<dbReference type="InterPro" id="IPR002906">
    <property type="entry name" value="Ribosomal_eS31"/>
</dbReference>
<dbReference type="InterPro" id="IPR022845">
    <property type="entry name" value="Ribosomal_eS31_arc"/>
</dbReference>
<dbReference type="InterPro" id="IPR011332">
    <property type="entry name" value="Ribosomal_zn-bd"/>
</dbReference>
<dbReference type="NCBIfam" id="NF001669">
    <property type="entry name" value="PRK00432.1"/>
    <property type="match status" value="1"/>
</dbReference>
<dbReference type="Pfam" id="PF01599">
    <property type="entry name" value="Ribosomal_S27"/>
    <property type="match status" value="1"/>
</dbReference>
<dbReference type="SMART" id="SM01402">
    <property type="entry name" value="Ribosomal_S27"/>
    <property type="match status" value="1"/>
</dbReference>
<dbReference type="SUPFAM" id="SSF57829">
    <property type="entry name" value="Zn-binding ribosomal proteins"/>
    <property type="match status" value="1"/>
</dbReference>
<accession>P61239</accession>
<keyword id="KW-0479">Metal-binding</keyword>
<keyword id="KW-0687">Ribonucleoprotein</keyword>
<keyword id="KW-0689">Ribosomal protein</keyword>
<keyword id="KW-0862">Zinc</keyword>
<keyword id="KW-0863">Zinc-finger</keyword>
<gene>
    <name evidence="1" type="primary">rps27ae</name>
    <name type="ordered locus">PH1910.1</name>
</gene>
<sequence>MGQKWKLYIVKDGKVIRKNKFCPRCGPGVFMADHGDRWACGKCGYTEWKR</sequence>
<comment type="cofactor">
    <cofactor evidence="1">
        <name>Zn(2+)</name>
        <dbReference type="ChEBI" id="CHEBI:29105"/>
    </cofactor>
    <text evidence="1">Binds 1 zinc ion per subunit.</text>
</comment>
<comment type="subunit">
    <text evidence="1">Part of the 30S ribosomal subunit.</text>
</comment>
<comment type="similarity">
    <text evidence="1">Belongs to the eukaryotic ribosomal protein eS31 family.</text>
</comment>
<organism>
    <name type="scientific">Pyrococcus horikoshii (strain ATCC 700860 / DSM 12428 / JCM 9974 / NBRC 100139 / OT-3)</name>
    <dbReference type="NCBI Taxonomy" id="70601"/>
    <lineage>
        <taxon>Archaea</taxon>
        <taxon>Methanobacteriati</taxon>
        <taxon>Methanobacteriota</taxon>
        <taxon>Thermococci</taxon>
        <taxon>Thermococcales</taxon>
        <taxon>Thermococcaceae</taxon>
        <taxon>Pyrococcus</taxon>
    </lineage>
</organism>